<proteinExistence type="inferred from homology"/>
<comment type="catalytic activity">
    <reaction evidence="1">
        <text>tRNA(Phe) + L-phenylalanine + ATP = L-phenylalanyl-tRNA(Phe) + AMP + diphosphate + H(+)</text>
        <dbReference type="Rhea" id="RHEA:19413"/>
        <dbReference type="Rhea" id="RHEA-COMP:9668"/>
        <dbReference type="Rhea" id="RHEA-COMP:9699"/>
        <dbReference type="ChEBI" id="CHEBI:15378"/>
        <dbReference type="ChEBI" id="CHEBI:30616"/>
        <dbReference type="ChEBI" id="CHEBI:33019"/>
        <dbReference type="ChEBI" id="CHEBI:58095"/>
        <dbReference type="ChEBI" id="CHEBI:78442"/>
        <dbReference type="ChEBI" id="CHEBI:78531"/>
        <dbReference type="ChEBI" id="CHEBI:456215"/>
        <dbReference type="EC" id="6.1.1.20"/>
    </reaction>
</comment>
<comment type="cofactor">
    <cofactor evidence="1">
        <name>Mg(2+)</name>
        <dbReference type="ChEBI" id="CHEBI:18420"/>
    </cofactor>
    <text evidence="1">Binds 2 magnesium ions per tetramer.</text>
</comment>
<comment type="subunit">
    <text evidence="1">Tetramer of two alpha and two beta subunits.</text>
</comment>
<comment type="subcellular location">
    <subcellularLocation>
        <location evidence="1">Cytoplasm</location>
    </subcellularLocation>
</comment>
<comment type="similarity">
    <text evidence="1">Belongs to the class-II aminoacyl-tRNA synthetase family. Phe-tRNA synthetase alpha subunit type 1 subfamily.</text>
</comment>
<evidence type="ECO:0000255" key="1">
    <source>
        <dbReference type="HAMAP-Rule" id="MF_00281"/>
    </source>
</evidence>
<keyword id="KW-0030">Aminoacyl-tRNA synthetase</keyword>
<keyword id="KW-0067">ATP-binding</keyword>
<keyword id="KW-0963">Cytoplasm</keyword>
<keyword id="KW-0436">Ligase</keyword>
<keyword id="KW-0460">Magnesium</keyword>
<keyword id="KW-0479">Metal-binding</keyword>
<keyword id="KW-0547">Nucleotide-binding</keyword>
<keyword id="KW-0648">Protein biosynthesis</keyword>
<feature type="chain" id="PRO_1000078846" description="Phenylalanine--tRNA ligase alpha subunit">
    <location>
        <begin position="1"/>
        <end position="341"/>
    </location>
</feature>
<feature type="binding site" evidence="1">
    <location>
        <position position="254"/>
    </location>
    <ligand>
        <name>Mg(2+)</name>
        <dbReference type="ChEBI" id="CHEBI:18420"/>
        <note>shared with beta subunit</note>
    </ligand>
</feature>
<name>SYFA_CHLPM</name>
<gene>
    <name evidence="1" type="primary">pheS</name>
    <name type="ordered locus">Cvib_0186</name>
</gene>
<dbReference type="EC" id="6.1.1.20" evidence="1"/>
<dbReference type="EMBL" id="CP000607">
    <property type="protein sequence ID" value="ABP36209.1"/>
    <property type="molecule type" value="Genomic_DNA"/>
</dbReference>
<dbReference type="SMR" id="A4SCK0"/>
<dbReference type="STRING" id="290318.Cvib_0186"/>
<dbReference type="KEGG" id="pvi:Cvib_0186"/>
<dbReference type="eggNOG" id="COG0016">
    <property type="taxonomic scope" value="Bacteria"/>
</dbReference>
<dbReference type="HOGENOM" id="CLU_025086_0_1_10"/>
<dbReference type="OrthoDB" id="9800719at2"/>
<dbReference type="GO" id="GO:0005737">
    <property type="term" value="C:cytoplasm"/>
    <property type="evidence" value="ECO:0007669"/>
    <property type="project" value="UniProtKB-SubCell"/>
</dbReference>
<dbReference type="GO" id="GO:0005524">
    <property type="term" value="F:ATP binding"/>
    <property type="evidence" value="ECO:0007669"/>
    <property type="project" value="UniProtKB-UniRule"/>
</dbReference>
<dbReference type="GO" id="GO:0000287">
    <property type="term" value="F:magnesium ion binding"/>
    <property type="evidence" value="ECO:0007669"/>
    <property type="project" value="UniProtKB-UniRule"/>
</dbReference>
<dbReference type="GO" id="GO:0004826">
    <property type="term" value="F:phenylalanine-tRNA ligase activity"/>
    <property type="evidence" value="ECO:0007669"/>
    <property type="project" value="UniProtKB-UniRule"/>
</dbReference>
<dbReference type="GO" id="GO:0000049">
    <property type="term" value="F:tRNA binding"/>
    <property type="evidence" value="ECO:0007669"/>
    <property type="project" value="InterPro"/>
</dbReference>
<dbReference type="GO" id="GO:0006432">
    <property type="term" value="P:phenylalanyl-tRNA aminoacylation"/>
    <property type="evidence" value="ECO:0007669"/>
    <property type="project" value="UniProtKB-UniRule"/>
</dbReference>
<dbReference type="CDD" id="cd00496">
    <property type="entry name" value="PheRS_alpha_core"/>
    <property type="match status" value="1"/>
</dbReference>
<dbReference type="Gene3D" id="3.30.930.10">
    <property type="entry name" value="Bira Bifunctional Protein, Domain 2"/>
    <property type="match status" value="1"/>
</dbReference>
<dbReference type="HAMAP" id="MF_00281">
    <property type="entry name" value="Phe_tRNA_synth_alpha1"/>
    <property type="match status" value="1"/>
</dbReference>
<dbReference type="InterPro" id="IPR006195">
    <property type="entry name" value="aa-tRNA-synth_II"/>
</dbReference>
<dbReference type="InterPro" id="IPR045864">
    <property type="entry name" value="aa-tRNA-synth_II/BPL/LPL"/>
</dbReference>
<dbReference type="InterPro" id="IPR004529">
    <property type="entry name" value="Phe-tRNA-synth_IIc_asu"/>
</dbReference>
<dbReference type="InterPro" id="IPR004188">
    <property type="entry name" value="Phe-tRNA_ligase_II_N"/>
</dbReference>
<dbReference type="InterPro" id="IPR022911">
    <property type="entry name" value="Phe_tRNA_ligase_alpha1_bac"/>
</dbReference>
<dbReference type="InterPro" id="IPR002319">
    <property type="entry name" value="Phenylalanyl-tRNA_Synthase"/>
</dbReference>
<dbReference type="InterPro" id="IPR010978">
    <property type="entry name" value="tRNA-bd_arm"/>
</dbReference>
<dbReference type="NCBIfam" id="TIGR00468">
    <property type="entry name" value="pheS"/>
    <property type="match status" value="1"/>
</dbReference>
<dbReference type="PANTHER" id="PTHR11538:SF41">
    <property type="entry name" value="PHENYLALANINE--TRNA LIGASE, MITOCHONDRIAL"/>
    <property type="match status" value="1"/>
</dbReference>
<dbReference type="PANTHER" id="PTHR11538">
    <property type="entry name" value="PHENYLALANYL-TRNA SYNTHETASE"/>
    <property type="match status" value="1"/>
</dbReference>
<dbReference type="Pfam" id="PF02912">
    <property type="entry name" value="Phe_tRNA-synt_N"/>
    <property type="match status" value="1"/>
</dbReference>
<dbReference type="Pfam" id="PF01409">
    <property type="entry name" value="tRNA-synt_2d"/>
    <property type="match status" value="1"/>
</dbReference>
<dbReference type="SUPFAM" id="SSF55681">
    <property type="entry name" value="Class II aaRS and biotin synthetases"/>
    <property type="match status" value="1"/>
</dbReference>
<dbReference type="SUPFAM" id="SSF46589">
    <property type="entry name" value="tRNA-binding arm"/>
    <property type="match status" value="1"/>
</dbReference>
<dbReference type="PROSITE" id="PS50862">
    <property type="entry name" value="AA_TRNA_LIGASE_II"/>
    <property type="match status" value="1"/>
</dbReference>
<protein>
    <recommendedName>
        <fullName evidence="1">Phenylalanine--tRNA ligase alpha subunit</fullName>
        <ecNumber evidence="1">6.1.1.20</ecNumber>
    </recommendedName>
    <alternativeName>
        <fullName evidence="1">Phenylalanyl-tRNA synthetase alpha subunit</fullName>
        <shortName evidence="1">PheRS</shortName>
    </alternativeName>
</protein>
<organism>
    <name type="scientific">Chlorobium phaeovibrioides (strain DSM 265 / 1930)</name>
    <name type="common">Prosthecochloris vibrioformis (strain DSM 265)</name>
    <dbReference type="NCBI Taxonomy" id="290318"/>
    <lineage>
        <taxon>Bacteria</taxon>
        <taxon>Pseudomonadati</taxon>
        <taxon>Chlorobiota</taxon>
        <taxon>Chlorobiia</taxon>
        <taxon>Chlorobiales</taxon>
        <taxon>Chlorobiaceae</taxon>
        <taxon>Chlorobium/Pelodictyon group</taxon>
        <taxon>Chlorobium</taxon>
    </lineage>
</organism>
<accession>A4SCK0</accession>
<reference key="1">
    <citation type="submission" date="2007-03" db="EMBL/GenBank/DDBJ databases">
        <title>Complete sequence of Prosthecochloris vibrioformis DSM 265.</title>
        <authorList>
            <consortium name="US DOE Joint Genome Institute"/>
            <person name="Copeland A."/>
            <person name="Lucas S."/>
            <person name="Lapidus A."/>
            <person name="Barry K."/>
            <person name="Detter J.C."/>
            <person name="Glavina del Rio T."/>
            <person name="Hammon N."/>
            <person name="Israni S."/>
            <person name="Pitluck S."/>
            <person name="Schmutz J."/>
            <person name="Larimer F."/>
            <person name="Land M."/>
            <person name="Hauser L."/>
            <person name="Mikhailova N."/>
            <person name="Li T."/>
            <person name="Overmann J."/>
            <person name="Schuster S.C."/>
            <person name="Bryant D.A."/>
            <person name="Richardson P."/>
        </authorList>
    </citation>
    <scope>NUCLEOTIDE SEQUENCE [LARGE SCALE GENOMIC DNA]</scope>
    <source>
        <strain>DSM 265 / 1930</strain>
    </source>
</reference>
<sequence>MEKSISSLQQQINAAPLNSEADIESFRLLYTVRKGLIAALFSQLKSVDPTDRPRIGNLLNQLKESAEARIAEAAESISHHEESSQPVIDLTLPGRVSFTGSEHPVQKVLGEMKRIFSAMGFAMATGPELELDSYNFDMLNFPPDHPARDMQDTFFIKRNGNEDDVLLRTHTSPVQVRVMLEEPPPIRVICPGKVYRNEAISSRSYCVFHQLEGLYIDKGVTFADLKATIYSFAHQMFGSDVKLRFRPSFFPFTEPSAEVDVTCYLCGGKGCKVCKKSGWLEIMGCGMVHPNVIQNCGIDPEVWSGYAFGMGVDRTVLLHYKIDDIRLLFENDIRMLRQFTA</sequence>